<keyword id="KW-0963">Cytoplasm</keyword>
<keyword id="KW-0444">Lipid biosynthesis</keyword>
<keyword id="KW-0443">Lipid metabolism</keyword>
<keyword id="KW-0520">NAD</keyword>
<keyword id="KW-0521">NADP</keyword>
<keyword id="KW-0547">Nucleotide-binding</keyword>
<keyword id="KW-0560">Oxidoreductase</keyword>
<keyword id="KW-0594">Phospholipid biosynthesis</keyword>
<keyword id="KW-1208">Phospholipid metabolism</keyword>
<organism>
    <name type="scientific">Rickettsia akari (strain Hartford)</name>
    <dbReference type="NCBI Taxonomy" id="293614"/>
    <lineage>
        <taxon>Bacteria</taxon>
        <taxon>Pseudomonadati</taxon>
        <taxon>Pseudomonadota</taxon>
        <taxon>Alphaproteobacteria</taxon>
        <taxon>Rickettsiales</taxon>
        <taxon>Rickettsiaceae</taxon>
        <taxon>Rickettsieae</taxon>
        <taxon>Rickettsia</taxon>
        <taxon>spotted fever group</taxon>
    </lineage>
</organism>
<sequence>MNKFKNIAVYGGGSFGTSLAALAAQNCSNVTLFLRDEEIAKEILHKKTNIKYLGGIKLPAHLHATTNLSVIKDFELIIIAVPSYAFDDSIKLLKTHGISEDNTLLIATKGFARNPTELFSDRLKTLLPHSSTAFFAGPNLAKELAKNLPASASIASLDIDIANKIANNISSKIFTTNMTSDIVTLQVAGALKNIFAIKSGIDLASEQGENARATLIVDALKEIITLSKVFGGLQKNSDILLEAGVVGDLVLTCYALGSRNTNFGYELGISSDKKKFLQEYKQLVEGREALKLVLDLIKQYDLHMPIISEVASYVMPA</sequence>
<dbReference type="EC" id="1.1.1.94" evidence="1"/>
<dbReference type="EMBL" id="CP000847">
    <property type="protein sequence ID" value="ABV74948.1"/>
    <property type="molecule type" value="Genomic_DNA"/>
</dbReference>
<dbReference type="RefSeq" id="WP_012149581.1">
    <property type="nucleotide sequence ID" value="NC_009881.1"/>
</dbReference>
<dbReference type="SMR" id="A8GNH3"/>
<dbReference type="STRING" id="293614.A1C_03310"/>
<dbReference type="KEGG" id="rak:A1C_03310"/>
<dbReference type="eggNOG" id="COG0240">
    <property type="taxonomic scope" value="Bacteria"/>
</dbReference>
<dbReference type="HOGENOM" id="CLU_033449_0_2_5"/>
<dbReference type="UniPathway" id="UPA00940"/>
<dbReference type="Proteomes" id="UP000006830">
    <property type="component" value="Chromosome"/>
</dbReference>
<dbReference type="GO" id="GO:0005829">
    <property type="term" value="C:cytosol"/>
    <property type="evidence" value="ECO:0007669"/>
    <property type="project" value="TreeGrafter"/>
</dbReference>
<dbReference type="GO" id="GO:0047952">
    <property type="term" value="F:glycerol-3-phosphate dehydrogenase [NAD(P)+] activity"/>
    <property type="evidence" value="ECO:0007669"/>
    <property type="project" value="UniProtKB-UniRule"/>
</dbReference>
<dbReference type="GO" id="GO:0051287">
    <property type="term" value="F:NAD binding"/>
    <property type="evidence" value="ECO:0007669"/>
    <property type="project" value="InterPro"/>
</dbReference>
<dbReference type="GO" id="GO:0005975">
    <property type="term" value="P:carbohydrate metabolic process"/>
    <property type="evidence" value="ECO:0007669"/>
    <property type="project" value="InterPro"/>
</dbReference>
<dbReference type="GO" id="GO:0046167">
    <property type="term" value="P:glycerol-3-phosphate biosynthetic process"/>
    <property type="evidence" value="ECO:0007669"/>
    <property type="project" value="UniProtKB-UniRule"/>
</dbReference>
<dbReference type="GO" id="GO:0046168">
    <property type="term" value="P:glycerol-3-phosphate catabolic process"/>
    <property type="evidence" value="ECO:0007669"/>
    <property type="project" value="InterPro"/>
</dbReference>
<dbReference type="GO" id="GO:0006650">
    <property type="term" value="P:glycerophospholipid metabolic process"/>
    <property type="evidence" value="ECO:0007669"/>
    <property type="project" value="UniProtKB-UniRule"/>
</dbReference>
<dbReference type="GO" id="GO:0008654">
    <property type="term" value="P:phospholipid biosynthetic process"/>
    <property type="evidence" value="ECO:0007669"/>
    <property type="project" value="UniProtKB-KW"/>
</dbReference>
<dbReference type="Gene3D" id="1.10.1040.10">
    <property type="entry name" value="N-(1-d-carboxylethyl)-l-norvaline Dehydrogenase, domain 2"/>
    <property type="match status" value="1"/>
</dbReference>
<dbReference type="Gene3D" id="3.40.50.720">
    <property type="entry name" value="NAD(P)-binding Rossmann-like Domain"/>
    <property type="match status" value="1"/>
</dbReference>
<dbReference type="HAMAP" id="MF_00394">
    <property type="entry name" value="NAD_Glyc3P_dehydrog"/>
    <property type="match status" value="1"/>
</dbReference>
<dbReference type="InterPro" id="IPR008927">
    <property type="entry name" value="6-PGluconate_DH-like_C_sf"/>
</dbReference>
<dbReference type="InterPro" id="IPR013328">
    <property type="entry name" value="6PGD_dom2"/>
</dbReference>
<dbReference type="InterPro" id="IPR006168">
    <property type="entry name" value="G3P_DH_NAD-dep"/>
</dbReference>
<dbReference type="InterPro" id="IPR006109">
    <property type="entry name" value="G3P_DH_NAD-dep_C"/>
</dbReference>
<dbReference type="InterPro" id="IPR011128">
    <property type="entry name" value="G3P_DH_NAD-dep_N"/>
</dbReference>
<dbReference type="InterPro" id="IPR036291">
    <property type="entry name" value="NAD(P)-bd_dom_sf"/>
</dbReference>
<dbReference type="NCBIfam" id="NF000947">
    <property type="entry name" value="PRK00094.2-5"/>
    <property type="match status" value="1"/>
</dbReference>
<dbReference type="PANTHER" id="PTHR11728">
    <property type="entry name" value="GLYCEROL-3-PHOSPHATE DEHYDROGENASE"/>
    <property type="match status" value="1"/>
</dbReference>
<dbReference type="PANTHER" id="PTHR11728:SF1">
    <property type="entry name" value="GLYCEROL-3-PHOSPHATE DEHYDROGENASE [NAD(+)] 2, CHLOROPLASTIC"/>
    <property type="match status" value="1"/>
</dbReference>
<dbReference type="Pfam" id="PF07479">
    <property type="entry name" value="NAD_Gly3P_dh_C"/>
    <property type="match status" value="1"/>
</dbReference>
<dbReference type="Pfam" id="PF01210">
    <property type="entry name" value="NAD_Gly3P_dh_N"/>
    <property type="match status" value="1"/>
</dbReference>
<dbReference type="PIRSF" id="PIRSF000114">
    <property type="entry name" value="Glycerol-3-P_dh"/>
    <property type="match status" value="1"/>
</dbReference>
<dbReference type="PRINTS" id="PR00077">
    <property type="entry name" value="GPDHDRGNASE"/>
</dbReference>
<dbReference type="SUPFAM" id="SSF48179">
    <property type="entry name" value="6-phosphogluconate dehydrogenase C-terminal domain-like"/>
    <property type="match status" value="1"/>
</dbReference>
<dbReference type="SUPFAM" id="SSF51735">
    <property type="entry name" value="NAD(P)-binding Rossmann-fold domains"/>
    <property type="match status" value="1"/>
</dbReference>
<dbReference type="PROSITE" id="PS00957">
    <property type="entry name" value="NAD_G3PDH"/>
    <property type="match status" value="1"/>
</dbReference>
<name>GPDA_RICAH</name>
<evidence type="ECO:0000255" key="1">
    <source>
        <dbReference type="HAMAP-Rule" id="MF_00394"/>
    </source>
</evidence>
<gene>
    <name evidence="1" type="primary">gpsA</name>
    <name type="ordered locus">A1C_03310</name>
</gene>
<reference key="1">
    <citation type="submission" date="2007-09" db="EMBL/GenBank/DDBJ databases">
        <title>Complete genome sequence of Rickettsia akari.</title>
        <authorList>
            <person name="Madan A."/>
            <person name="Fahey J."/>
            <person name="Helton E."/>
            <person name="Ketteman M."/>
            <person name="Madan A."/>
            <person name="Rodrigues S."/>
            <person name="Sanchez A."/>
            <person name="Whiting M."/>
            <person name="Dasch G."/>
            <person name="Eremeeva M."/>
        </authorList>
    </citation>
    <scope>NUCLEOTIDE SEQUENCE [LARGE SCALE GENOMIC DNA]</scope>
    <source>
        <strain>Hartford</strain>
    </source>
</reference>
<feature type="chain" id="PRO_1000123179" description="Glycerol-3-phosphate dehydrogenase [NAD(P)+]">
    <location>
        <begin position="1"/>
        <end position="317"/>
    </location>
</feature>
<feature type="active site" description="Proton acceptor" evidence="1">
    <location>
        <position position="192"/>
    </location>
</feature>
<feature type="binding site" evidence="1">
    <location>
        <position position="14"/>
    </location>
    <ligand>
        <name>NADPH</name>
        <dbReference type="ChEBI" id="CHEBI:57783"/>
    </ligand>
</feature>
<feature type="binding site" evidence="1">
    <location>
        <position position="15"/>
    </location>
    <ligand>
        <name>NADPH</name>
        <dbReference type="ChEBI" id="CHEBI:57783"/>
    </ligand>
</feature>
<feature type="binding site" evidence="1">
    <location>
        <position position="35"/>
    </location>
    <ligand>
        <name>NADPH</name>
        <dbReference type="ChEBI" id="CHEBI:57783"/>
    </ligand>
</feature>
<feature type="binding site" evidence="1">
    <location>
        <position position="109"/>
    </location>
    <ligand>
        <name>NADPH</name>
        <dbReference type="ChEBI" id="CHEBI:57783"/>
    </ligand>
</feature>
<feature type="binding site" evidence="1">
    <location>
        <position position="109"/>
    </location>
    <ligand>
        <name>sn-glycerol 3-phosphate</name>
        <dbReference type="ChEBI" id="CHEBI:57597"/>
    </ligand>
</feature>
<feature type="binding site" evidence="1">
    <location>
        <position position="137"/>
    </location>
    <ligand>
        <name>sn-glycerol 3-phosphate</name>
        <dbReference type="ChEBI" id="CHEBI:57597"/>
    </ligand>
</feature>
<feature type="binding site" evidence="1">
    <location>
        <position position="141"/>
    </location>
    <ligand>
        <name>NADPH</name>
        <dbReference type="ChEBI" id="CHEBI:57783"/>
    </ligand>
</feature>
<feature type="binding site" evidence="1">
    <location>
        <position position="192"/>
    </location>
    <ligand>
        <name>sn-glycerol 3-phosphate</name>
        <dbReference type="ChEBI" id="CHEBI:57597"/>
    </ligand>
</feature>
<feature type="binding site" evidence="1">
    <location>
        <position position="248"/>
    </location>
    <ligand>
        <name>sn-glycerol 3-phosphate</name>
        <dbReference type="ChEBI" id="CHEBI:57597"/>
    </ligand>
</feature>
<feature type="binding site" evidence="1">
    <location>
        <position position="258"/>
    </location>
    <ligand>
        <name>sn-glycerol 3-phosphate</name>
        <dbReference type="ChEBI" id="CHEBI:57597"/>
    </ligand>
</feature>
<feature type="binding site" evidence="1">
    <location>
        <position position="259"/>
    </location>
    <ligand>
        <name>NADPH</name>
        <dbReference type="ChEBI" id="CHEBI:57783"/>
    </ligand>
</feature>
<feature type="binding site" evidence="1">
    <location>
        <position position="259"/>
    </location>
    <ligand>
        <name>sn-glycerol 3-phosphate</name>
        <dbReference type="ChEBI" id="CHEBI:57597"/>
    </ligand>
</feature>
<feature type="binding site" evidence="1">
    <location>
        <position position="260"/>
    </location>
    <ligand>
        <name>sn-glycerol 3-phosphate</name>
        <dbReference type="ChEBI" id="CHEBI:57597"/>
    </ligand>
</feature>
<feature type="binding site" evidence="1">
    <location>
        <position position="283"/>
    </location>
    <ligand>
        <name>NADPH</name>
        <dbReference type="ChEBI" id="CHEBI:57783"/>
    </ligand>
</feature>
<feature type="binding site" evidence="1">
    <location>
        <position position="285"/>
    </location>
    <ligand>
        <name>NADPH</name>
        <dbReference type="ChEBI" id="CHEBI:57783"/>
    </ligand>
</feature>
<proteinExistence type="inferred from homology"/>
<comment type="function">
    <text evidence="1">Catalyzes the reduction of the glycolytic intermediate dihydroxyacetone phosphate (DHAP) to sn-glycerol 3-phosphate (G3P), the key precursor for phospholipid synthesis.</text>
</comment>
<comment type="catalytic activity">
    <reaction evidence="1">
        <text>sn-glycerol 3-phosphate + NAD(+) = dihydroxyacetone phosphate + NADH + H(+)</text>
        <dbReference type="Rhea" id="RHEA:11092"/>
        <dbReference type="ChEBI" id="CHEBI:15378"/>
        <dbReference type="ChEBI" id="CHEBI:57540"/>
        <dbReference type="ChEBI" id="CHEBI:57597"/>
        <dbReference type="ChEBI" id="CHEBI:57642"/>
        <dbReference type="ChEBI" id="CHEBI:57945"/>
        <dbReference type="EC" id="1.1.1.94"/>
    </reaction>
    <physiologicalReaction direction="right-to-left" evidence="1">
        <dbReference type="Rhea" id="RHEA:11094"/>
    </physiologicalReaction>
</comment>
<comment type="catalytic activity">
    <reaction evidence="1">
        <text>sn-glycerol 3-phosphate + NADP(+) = dihydroxyacetone phosphate + NADPH + H(+)</text>
        <dbReference type="Rhea" id="RHEA:11096"/>
        <dbReference type="ChEBI" id="CHEBI:15378"/>
        <dbReference type="ChEBI" id="CHEBI:57597"/>
        <dbReference type="ChEBI" id="CHEBI:57642"/>
        <dbReference type="ChEBI" id="CHEBI:57783"/>
        <dbReference type="ChEBI" id="CHEBI:58349"/>
        <dbReference type="EC" id="1.1.1.94"/>
    </reaction>
    <physiologicalReaction direction="right-to-left" evidence="1">
        <dbReference type="Rhea" id="RHEA:11098"/>
    </physiologicalReaction>
</comment>
<comment type="pathway">
    <text evidence="1">Membrane lipid metabolism; glycerophospholipid metabolism.</text>
</comment>
<comment type="subcellular location">
    <subcellularLocation>
        <location evidence="1">Cytoplasm</location>
    </subcellularLocation>
</comment>
<comment type="similarity">
    <text evidence="1">Belongs to the NAD-dependent glycerol-3-phosphate dehydrogenase family.</text>
</comment>
<accession>A8GNH3</accession>
<protein>
    <recommendedName>
        <fullName evidence="1">Glycerol-3-phosphate dehydrogenase [NAD(P)+]</fullName>
        <ecNumber evidence="1">1.1.1.94</ecNumber>
    </recommendedName>
    <alternativeName>
        <fullName evidence="1">NAD(P)(+)-dependent glycerol-3-phosphate dehydrogenase</fullName>
    </alternativeName>
    <alternativeName>
        <fullName evidence="1">NAD(P)H-dependent dihydroxyacetone-phosphate reductase</fullName>
    </alternativeName>
</protein>